<dbReference type="EC" id="5.3.3.2" evidence="1"/>
<dbReference type="EMBL" id="AJ010302">
    <property type="protein sequence ID" value="CAB38734.1"/>
    <property type="molecule type" value="Genomic_DNA"/>
</dbReference>
<dbReference type="EMBL" id="AF195122">
    <property type="protein sequence ID" value="AAF24284.1"/>
    <property type="molecule type" value="Genomic_DNA"/>
</dbReference>
<dbReference type="EMBL" id="CP000143">
    <property type="protein sequence ID" value="ABA79449.1"/>
    <property type="molecule type" value="Genomic_DNA"/>
</dbReference>
<dbReference type="PIR" id="T50740">
    <property type="entry name" value="T50740"/>
</dbReference>
<dbReference type="RefSeq" id="WP_011338119.1">
    <property type="nucleotide sequence ID" value="NZ_CP030271.1"/>
</dbReference>
<dbReference type="RefSeq" id="YP_353350.1">
    <property type="nucleotide sequence ID" value="NC_007493.2"/>
</dbReference>
<dbReference type="SMR" id="Q9Z5D3"/>
<dbReference type="STRING" id="272943.RSP_0276"/>
<dbReference type="EnsemblBacteria" id="ABA79449">
    <property type="protein sequence ID" value="ABA79449"/>
    <property type="gene ID" value="RSP_0276"/>
</dbReference>
<dbReference type="GeneID" id="3719285"/>
<dbReference type="KEGG" id="rsp:RSP_0276"/>
<dbReference type="PATRIC" id="fig|272943.9.peg.2219"/>
<dbReference type="eggNOG" id="COG1443">
    <property type="taxonomic scope" value="Bacteria"/>
</dbReference>
<dbReference type="OrthoDB" id="9809458at2"/>
<dbReference type="PhylomeDB" id="Q9Z5D3"/>
<dbReference type="UniPathway" id="UPA00059">
    <property type="reaction ID" value="UER00104"/>
</dbReference>
<dbReference type="UniPathway" id="UPA00668"/>
<dbReference type="Proteomes" id="UP000002703">
    <property type="component" value="Chromosome 1"/>
</dbReference>
<dbReference type="GO" id="GO:0005737">
    <property type="term" value="C:cytoplasm"/>
    <property type="evidence" value="ECO:0007669"/>
    <property type="project" value="UniProtKB-SubCell"/>
</dbReference>
<dbReference type="GO" id="GO:0004452">
    <property type="term" value="F:isopentenyl-diphosphate delta-isomerase activity"/>
    <property type="evidence" value="ECO:0007669"/>
    <property type="project" value="UniProtKB-UniRule"/>
</dbReference>
<dbReference type="GO" id="GO:0046872">
    <property type="term" value="F:metal ion binding"/>
    <property type="evidence" value="ECO:0007669"/>
    <property type="project" value="UniProtKB-KW"/>
</dbReference>
<dbReference type="GO" id="GO:0015995">
    <property type="term" value="P:chlorophyll biosynthetic process"/>
    <property type="evidence" value="ECO:0007669"/>
    <property type="project" value="UniProtKB-UniRule"/>
</dbReference>
<dbReference type="GO" id="GO:0050992">
    <property type="term" value="P:dimethylallyl diphosphate biosynthetic process"/>
    <property type="evidence" value="ECO:0007669"/>
    <property type="project" value="UniProtKB-UniRule"/>
</dbReference>
<dbReference type="GO" id="GO:0009240">
    <property type="term" value="P:isopentenyl diphosphate biosynthetic process"/>
    <property type="evidence" value="ECO:0007669"/>
    <property type="project" value="TreeGrafter"/>
</dbReference>
<dbReference type="GO" id="GO:0015979">
    <property type="term" value="P:photosynthesis"/>
    <property type="evidence" value="ECO:0007669"/>
    <property type="project" value="UniProtKB-UniRule"/>
</dbReference>
<dbReference type="CDD" id="cd02885">
    <property type="entry name" value="NUDIX_IPP_Isomerase"/>
    <property type="match status" value="1"/>
</dbReference>
<dbReference type="Gene3D" id="3.90.79.10">
    <property type="entry name" value="Nucleoside Triphosphate Pyrophosphohydrolase"/>
    <property type="match status" value="1"/>
</dbReference>
<dbReference type="HAMAP" id="MF_00202">
    <property type="entry name" value="Idi"/>
    <property type="match status" value="1"/>
</dbReference>
<dbReference type="InterPro" id="IPR056375">
    <property type="entry name" value="Idi_bact"/>
</dbReference>
<dbReference type="InterPro" id="IPR011876">
    <property type="entry name" value="IsopentenylPP_isomerase_typ1"/>
</dbReference>
<dbReference type="InterPro" id="IPR015797">
    <property type="entry name" value="NUDIX_hydrolase-like_dom_sf"/>
</dbReference>
<dbReference type="InterPro" id="IPR000086">
    <property type="entry name" value="NUDIX_hydrolase_dom"/>
</dbReference>
<dbReference type="NCBIfam" id="TIGR02150">
    <property type="entry name" value="IPP_isom_1"/>
    <property type="match status" value="1"/>
</dbReference>
<dbReference type="NCBIfam" id="NF002995">
    <property type="entry name" value="PRK03759.1"/>
    <property type="match status" value="1"/>
</dbReference>
<dbReference type="PANTHER" id="PTHR10885">
    <property type="entry name" value="ISOPENTENYL-DIPHOSPHATE DELTA-ISOMERASE"/>
    <property type="match status" value="1"/>
</dbReference>
<dbReference type="PANTHER" id="PTHR10885:SF0">
    <property type="entry name" value="ISOPENTENYL-DIPHOSPHATE DELTA-ISOMERASE"/>
    <property type="match status" value="1"/>
</dbReference>
<dbReference type="Pfam" id="PF00293">
    <property type="entry name" value="NUDIX"/>
    <property type="match status" value="1"/>
</dbReference>
<dbReference type="PIRSF" id="PIRSF018427">
    <property type="entry name" value="Isopntndiph_ism"/>
    <property type="match status" value="1"/>
</dbReference>
<dbReference type="SUPFAM" id="SSF55811">
    <property type="entry name" value="Nudix"/>
    <property type="match status" value="1"/>
</dbReference>
<dbReference type="PROSITE" id="PS51462">
    <property type="entry name" value="NUDIX"/>
    <property type="match status" value="1"/>
</dbReference>
<keyword id="KW-0149">Chlorophyll biosynthesis</keyword>
<keyword id="KW-0963">Cytoplasm</keyword>
<keyword id="KW-0413">Isomerase</keyword>
<keyword id="KW-0414">Isoprene biosynthesis</keyword>
<keyword id="KW-0460">Magnesium</keyword>
<keyword id="KW-0464">Manganese</keyword>
<keyword id="KW-0479">Metal-binding</keyword>
<keyword id="KW-0602">Photosynthesis</keyword>
<keyword id="KW-1185">Reference proteome</keyword>
<evidence type="ECO:0000255" key="1">
    <source>
        <dbReference type="HAMAP-Rule" id="MF_00202"/>
    </source>
</evidence>
<name>IDI_CERS4</name>
<sequence length="177" mass="20295">MTEMVPAWVEGRLMPVEKLEAHQRGLRHMAISVFVMAGEAVLIQRRAAGKYHTPGLWANTCCTHPRWGEEAADCAVRRLREELGITGLVTVFADRVEYRADVGNGLTEHEVVDIFVAEAPSDLPVNPDPEEVWETRWVDLTDLAREVKEHPERFTPWLRIYLAEHMERIFGKLRVVQ</sequence>
<reference key="1">
    <citation type="journal article" date="1999" name="Photosyn. Res.">
        <title>The photosynthesis gene cluster of Rhodobacter sphaeroides.</title>
        <authorList>
            <person name="Naylor G.W."/>
            <person name="Addlesee H.A."/>
            <person name="Gibson L.C.D."/>
            <person name="Hunter C.N."/>
        </authorList>
    </citation>
    <scope>NUCLEOTIDE SEQUENCE [GENOMIC DNA]</scope>
</reference>
<reference key="2">
    <citation type="journal article" date="2000" name="Nucleic Acids Res.">
        <title>DNA sequence analysis of the photosynthesis region of Rhodobacter sphaeroides 2.4.1.</title>
        <authorList>
            <person name="Choudhary M."/>
            <person name="Kaplan S."/>
        </authorList>
    </citation>
    <scope>NUCLEOTIDE SEQUENCE [GENOMIC DNA]</scope>
</reference>
<reference key="3">
    <citation type="submission" date="2005-09" db="EMBL/GenBank/DDBJ databases">
        <title>Complete sequence of chromosome 1 of Rhodobacter sphaeroides 2.4.1.</title>
        <authorList>
            <person name="Copeland A."/>
            <person name="Lucas S."/>
            <person name="Lapidus A."/>
            <person name="Barry K."/>
            <person name="Detter J.C."/>
            <person name="Glavina T."/>
            <person name="Hammon N."/>
            <person name="Israni S."/>
            <person name="Pitluck S."/>
            <person name="Richardson P."/>
            <person name="Mackenzie C."/>
            <person name="Choudhary M."/>
            <person name="Larimer F."/>
            <person name="Hauser L.J."/>
            <person name="Land M."/>
            <person name="Donohue T.J."/>
            <person name="Kaplan S."/>
        </authorList>
    </citation>
    <scope>NUCLEOTIDE SEQUENCE [LARGE SCALE GENOMIC DNA]</scope>
    <source>
        <strain>ATCC 17023 / DSM 158 / JCM 6121 / CCUG 31486 / LMG 2827 / NBRC 12203 / NCIMB 8253 / ATH 2.4.1.</strain>
    </source>
</reference>
<protein>
    <recommendedName>
        <fullName evidence="1">Isopentenyl-diphosphate Delta-isomerase</fullName>
        <shortName evidence="1">IPP isomerase</shortName>
        <ecNumber evidence="1">5.3.3.2</ecNumber>
    </recommendedName>
    <alternativeName>
        <fullName evidence="1">IPP:DMAPP isomerase</fullName>
    </alternativeName>
    <alternativeName>
        <fullName evidence="1">Isopentenyl pyrophosphate isomerase</fullName>
    </alternativeName>
</protein>
<comment type="function">
    <text evidence="1">Catalyzes the 1,3-allylic rearrangement of the homoallylic substrate isopentenyl (IPP) to its highly electrophilic allylic isomer, dimethylallyl diphosphate (DMAPP).</text>
</comment>
<comment type="catalytic activity">
    <reaction evidence="1">
        <text>isopentenyl diphosphate = dimethylallyl diphosphate</text>
        <dbReference type="Rhea" id="RHEA:23284"/>
        <dbReference type="ChEBI" id="CHEBI:57623"/>
        <dbReference type="ChEBI" id="CHEBI:128769"/>
        <dbReference type="EC" id="5.3.3.2"/>
    </reaction>
</comment>
<comment type="cofactor">
    <cofactor evidence="1">
        <name>Mg(2+)</name>
        <dbReference type="ChEBI" id="CHEBI:18420"/>
    </cofactor>
    <text evidence="1">Binds 1 Mg(2+) ion per subunit. The magnesium ion binds only when substrate is bound.</text>
</comment>
<comment type="cofactor">
    <cofactor evidence="1">
        <name>Mn(2+)</name>
        <dbReference type="ChEBI" id="CHEBI:29035"/>
    </cofactor>
    <text evidence="1">Binds 1 Mn(2+) ion per subunit.</text>
</comment>
<comment type="pathway">
    <text evidence="1">Isoprenoid biosynthesis; dimethylallyl diphosphate biosynthesis; dimethylallyl diphosphate from isopentenyl diphosphate: step 1/1.</text>
</comment>
<comment type="pathway">
    <text evidence="1">Porphyrin-containing compound metabolism; chlorophyll biosynthesis.</text>
</comment>
<comment type="subcellular location">
    <subcellularLocation>
        <location evidence="1">Cytoplasm</location>
    </subcellularLocation>
</comment>
<comment type="similarity">
    <text evidence="1">Belongs to the IPP isomerase type 1 family.</text>
</comment>
<gene>
    <name evidence="1" type="primary">idi</name>
    <name type="ordered locus">RHOS4_18810</name>
    <name type="ORF">RSP_0276</name>
</gene>
<organism>
    <name type="scientific">Cereibacter sphaeroides (strain ATCC 17023 / DSM 158 / JCM 6121 / CCUG 31486 / LMG 2827 / NBRC 12203 / NCIMB 8253 / ATH 2.4.1.)</name>
    <name type="common">Rhodobacter sphaeroides</name>
    <dbReference type="NCBI Taxonomy" id="272943"/>
    <lineage>
        <taxon>Bacteria</taxon>
        <taxon>Pseudomonadati</taxon>
        <taxon>Pseudomonadota</taxon>
        <taxon>Alphaproteobacteria</taxon>
        <taxon>Rhodobacterales</taxon>
        <taxon>Paracoccaceae</taxon>
        <taxon>Cereibacter</taxon>
    </lineage>
</organism>
<accession>Q9Z5D3</accession>
<accession>Q3J185</accession>
<proteinExistence type="inferred from homology"/>
<feature type="chain" id="PRO_0000205261" description="Isopentenyl-diphosphate Delta-isomerase">
    <location>
        <begin position="1"/>
        <end position="177"/>
    </location>
</feature>
<feature type="domain" description="Nudix hydrolase">
    <location>
        <begin position="26"/>
        <end position="160"/>
    </location>
</feature>
<feature type="active site" evidence="1">
    <location>
        <position position="62"/>
    </location>
</feature>
<feature type="active site" evidence="1">
    <location>
        <position position="110"/>
    </location>
</feature>
<feature type="binding site" evidence="1">
    <location>
        <position position="22"/>
    </location>
    <ligand>
        <name>Mn(2+)</name>
        <dbReference type="ChEBI" id="CHEBI:29035"/>
    </ligand>
</feature>
<feature type="binding site" evidence="1">
    <location>
        <position position="28"/>
    </location>
    <ligand>
        <name>Mn(2+)</name>
        <dbReference type="ChEBI" id="CHEBI:29035"/>
    </ligand>
</feature>
<feature type="binding site" evidence="1">
    <location>
        <position position="62"/>
    </location>
    <ligand>
        <name>Mg(2+)</name>
        <dbReference type="ChEBI" id="CHEBI:18420"/>
    </ligand>
</feature>
<feature type="binding site" evidence="1">
    <location>
        <position position="64"/>
    </location>
    <ligand>
        <name>Mn(2+)</name>
        <dbReference type="ChEBI" id="CHEBI:29035"/>
    </ligand>
</feature>
<feature type="binding site" evidence="1">
    <location>
        <position position="82"/>
    </location>
    <ligand>
        <name>Mg(2+)</name>
        <dbReference type="ChEBI" id="CHEBI:18420"/>
    </ligand>
</feature>
<feature type="binding site" evidence="1">
    <location>
        <position position="108"/>
    </location>
    <ligand>
        <name>Mn(2+)</name>
        <dbReference type="ChEBI" id="CHEBI:29035"/>
    </ligand>
</feature>
<feature type="binding site" evidence="1">
    <location>
        <position position="110"/>
    </location>
    <ligand>
        <name>Mn(2+)</name>
        <dbReference type="ChEBI" id="CHEBI:29035"/>
    </ligand>
</feature>